<protein>
    <recommendedName>
        <fullName evidence="1">Phospho-N-acetylmuramoyl-pentapeptide-transferase</fullName>
        <ecNumber evidence="1">2.7.8.13</ecNumber>
    </recommendedName>
    <alternativeName>
        <fullName evidence="1">UDP-MurNAc-pentapeptide phosphotransferase</fullName>
    </alternativeName>
</protein>
<keyword id="KW-0131">Cell cycle</keyword>
<keyword id="KW-0132">Cell division</keyword>
<keyword id="KW-0997">Cell inner membrane</keyword>
<keyword id="KW-1003">Cell membrane</keyword>
<keyword id="KW-0133">Cell shape</keyword>
<keyword id="KW-0961">Cell wall biogenesis/degradation</keyword>
<keyword id="KW-0460">Magnesium</keyword>
<keyword id="KW-0472">Membrane</keyword>
<keyword id="KW-0479">Metal-binding</keyword>
<keyword id="KW-0573">Peptidoglycan synthesis</keyword>
<keyword id="KW-0808">Transferase</keyword>
<keyword id="KW-0812">Transmembrane</keyword>
<keyword id="KW-1133">Transmembrane helix</keyword>
<feature type="chain" id="PRO_1000090598" description="Phospho-N-acetylmuramoyl-pentapeptide-transferase">
    <location>
        <begin position="1"/>
        <end position="360"/>
    </location>
</feature>
<feature type="transmembrane region" description="Helical" evidence="1">
    <location>
        <begin position="27"/>
        <end position="47"/>
    </location>
</feature>
<feature type="transmembrane region" description="Helical" evidence="1">
    <location>
        <begin position="71"/>
        <end position="91"/>
    </location>
</feature>
<feature type="transmembrane region" description="Helical" evidence="1">
    <location>
        <begin position="93"/>
        <end position="113"/>
    </location>
</feature>
<feature type="transmembrane region" description="Helical" evidence="1">
    <location>
        <begin position="128"/>
        <end position="148"/>
    </location>
</feature>
<feature type="transmembrane region" description="Helical" evidence="1">
    <location>
        <begin position="168"/>
        <end position="188"/>
    </location>
</feature>
<feature type="transmembrane region" description="Helical" evidence="1">
    <location>
        <begin position="199"/>
        <end position="219"/>
    </location>
</feature>
<feature type="transmembrane region" description="Helical" evidence="1">
    <location>
        <begin position="239"/>
        <end position="259"/>
    </location>
</feature>
<feature type="transmembrane region" description="Helical" evidence="1">
    <location>
        <begin position="262"/>
        <end position="282"/>
    </location>
</feature>
<feature type="transmembrane region" description="Helical" evidence="1">
    <location>
        <begin position="288"/>
        <end position="308"/>
    </location>
</feature>
<feature type="transmembrane region" description="Helical" evidence="1">
    <location>
        <begin position="337"/>
        <end position="357"/>
    </location>
</feature>
<proteinExistence type="inferred from homology"/>
<evidence type="ECO:0000255" key="1">
    <source>
        <dbReference type="HAMAP-Rule" id="MF_00038"/>
    </source>
</evidence>
<organism>
    <name type="scientific">Brucella abortus (strain S19)</name>
    <dbReference type="NCBI Taxonomy" id="430066"/>
    <lineage>
        <taxon>Bacteria</taxon>
        <taxon>Pseudomonadati</taxon>
        <taxon>Pseudomonadota</taxon>
        <taxon>Alphaproteobacteria</taxon>
        <taxon>Hyphomicrobiales</taxon>
        <taxon>Brucellaceae</taxon>
        <taxon>Brucella/Ochrobactrum group</taxon>
        <taxon>Brucella</taxon>
    </lineage>
</organism>
<dbReference type="EC" id="2.7.8.13" evidence="1"/>
<dbReference type="EMBL" id="CP000887">
    <property type="protein sequence ID" value="ACD72854.1"/>
    <property type="molecule type" value="Genomic_DNA"/>
</dbReference>
<dbReference type="RefSeq" id="WP_002964542.1">
    <property type="nucleotide sequence ID" value="NC_010742.1"/>
</dbReference>
<dbReference type="SMR" id="B2S6Q7"/>
<dbReference type="GeneID" id="93016268"/>
<dbReference type="KEGG" id="bmc:BAbS19_I13590"/>
<dbReference type="HOGENOM" id="CLU_023982_0_0_5"/>
<dbReference type="UniPathway" id="UPA00219"/>
<dbReference type="Proteomes" id="UP000002565">
    <property type="component" value="Chromosome 1"/>
</dbReference>
<dbReference type="GO" id="GO:0005886">
    <property type="term" value="C:plasma membrane"/>
    <property type="evidence" value="ECO:0007669"/>
    <property type="project" value="UniProtKB-SubCell"/>
</dbReference>
<dbReference type="GO" id="GO:0046872">
    <property type="term" value="F:metal ion binding"/>
    <property type="evidence" value="ECO:0007669"/>
    <property type="project" value="UniProtKB-KW"/>
</dbReference>
<dbReference type="GO" id="GO:0008963">
    <property type="term" value="F:phospho-N-acetylmuramoyl-pentapeptide-transferase activity"/>
    <property type="evidence" value="ECO:0007669"/>
    <property type="project" value="UniProtKB-UniRule"/>
</dbReference>
<dbReference type="GO" id="GO:0051992">
    <property type="term" value="F:UDP-N-acetylmuramoyl-L-alanyl-D-glutamyl-meso-2,6-diaminopimelyl-D-alanyl-D-alanine:undecaprenyl-phosphate transferase activity"/>
    <property type="evidence" value="ECO:0007669"/>
    <property type="project" value="RHEA"/>
</dbReference>
<dbReference type="GO" id="GO:0051301">
    <property type="term" value="P:cell division"/>
    <property type="evidence" value="ECO:0007669"/>
    <property type="project" value="UniProtKB-KW"/>
</dbReference>
<dbReference type="GO" id="GO:0071555">
    <property type="term" value="P:cell wall organization"/>
    <property type="evidence" value="ECO:0007669"/>
    <property type="project" value="UniProtKB-KW"/>
</dbReference>
<dbReference type="GO" id="GO:0009252">
    <property type="term" value="P:peptidoglycan biosynthetic process"/>
    <property type="evidence" value="ECO:0007669"/>
    <property type="project" value="UniProtKB-UniRule"/>
</dbReference>
<dbReference type="GO" id="GO:0008360">
    <property type="term" value="P:regulation of cell shape"/>
    <property type="evidence" value="ECO:0007669"/>
    <property type="project" value="UniProtKB-KW"/>
</dbReference>
<dbReference type="CDD" id="cd06852">
    <property type="entry name" value="GT_MraY"/>
    <property type="match status" value="1"/>
</dbReference>
<dbReference type="HAMAP" id="MF_00038">
    <property type="entry name" value="MraY"/>
    <property type="match status" value="1"/>
</dbReference>
<dbReference type="InterPro" id="IPR000715">
    <property type="entry name" value="Glycosyl_transferase_4"/>
</dbReference>
<dbReference type="InterPro" id="IPR003524">
    <property type="entry name" value="PNAcMuramoyl-5peptid_Trfase"/>
</dbReference>
<dbReference type="InterPro" id="IPR018480">
    <property type="entry name" value="PNAcMuramoyl-5peptid_Trfase_CS"/>
</dbReference>
<dbReference type="NCBIfam" id="TIGR00445">
    <property type="entry name" value="mraY"/>
    <property type="match status" value="1"/>
</dbReference>
<dbReference type="PANTHER" id="PTHR22926">
    <property type="entry name" value="PHOSPHO-N-ACETYLMURAMOYL-PENTAPEPTIDE-TRANSFERASE"/>
    <property type="match status" value="1"/>
</dbReference>
<dbReference type="PANTHER" id="PTHR22926:SF5">
    <property type="entry name" value="PHOSPHO-N-ACETYLMURAMOYL-PENTAPEPTIDE-TRANSFERASE HOMOLOG"/>
    <property type="match status" value="1"/>
</dbReference>
<dbReference type="Pfam" id="PF00953">
    <property type="entry name" value="Glycos_transf_4"/>
    <property type="match status" value="1"/>
</dbReference>
<dbReference type="Pfam" id="PF10555">
    <property type="entry name" value="MraY_sig1"/>
    <property type="match status" value="1"/>
</dbReference>
<dbReference type="PROSITE" id="PS01347">
    <property type="entry name" value="MRAY_1"/>
    <property type="match status" value="1"/>
</dbReference>
<dbReference type="PROSITE" id="PS01348">
    <property type="entry name" value="MRAY_2"/>
    <property type="match status" value="1"/>
</dbReference>
<reference key="1">
    <citation type="journal article" date="2008" name="PLoS ONE">
        <title>Genome sequence of Brucella abortus vaccine strain S19 compared to virulent strains yields candidate virulence genes.</title>
        <authorList>
            <person name="Crasta O.R."/>
            <person name="Folkerts O."/>
            <person name="Fei Z."/>
            <person name="Mane S.P."/>
            <person name="Evans C."/>
            <person name="Martino-Catt S."/>
            <person name="Bricker B."/>
            <person name="Yu G."/>
            <person name="Du L."/>
            <person name="Sobral B.W."/>
        </authorList>
    </citation>
    <scope>NUCLEOTIDE SEQUENCE [LARGE SCALE GENOMIC DNA]</scope>
    <source>
        <strain>S19</strain>
    </source>
</reference>
<sequence length="360" mass="38745">MLMFLTHFAEHVTPFNVFRYITFRTGGAMITSALIVFLFGPTIINSLRVRQGKGQPIRADGPQTHFKKAGTPTMGGLMIMTGILASCLLWANLASVYVWVVLMVSVGFGAIGFYDDYLKVTKQSDKGFSGKARLGIEFLIAAIAAFTIMRAGQEPFSSSLTFPFVKQLVINLSWFFIPFAAFVMVGAGNAVNLTDGLDGLAIVPVMVAAASFGFIAYLSGNAIFADYLQIHFVPGTGELAVVLGAVIGAGLGFLWFNAPPAAIFMGDTGSLALGGMLGTVAVATKHEIVLAIIGGLFVMEALSVIIQVGFFKMTGRRVFLMAPIHHHFEKKGWTESQVVIRFWIVAIILAMIGLSTLKLR</sequence>
<name>MRAY_BRUA1</name>
<comment type="function">
    <text evidence="1">Catalyzes the initial step of the lipid cycle reactions in the biosynthesis of the cell wall peptidoglycan: transfers peptidoglycan precursor phospho-MurNAc-pentapeptide from UDP-MurNAc-pentapeptide onto the lipid carrier undecaprenyl phosphate, yielding undecaprenyl-pyrophosphoryl-MurNAc-pentapeptide, known as lipid I.</text>
</comment>
<comment type="catalytic activity">
    <reaction evidence="1">
        <text>UDP-N-acetyl-alpha-D-muramoyl-L-alanyl-gamma-D-glutamyl-meso-2,6-diaminopimeloyl-D-alanyl-D-alanine + di-trans,octa-cis-undecaprenyl phosphate = di-trans,octa-cis-undecaprenyl diphospho-N-acetyl-alpha-D-muramoyl-L-alanyl-D-glutamyl-meso-2,6-diaminopimeloyl-D-alanyl-D-alanine + UMP</text>
        <dbReference type="Rhea" id="RHEA:28386"/>
        <dbReference type="ChEBI" id="CHEBI:57865"/>
        <dbReference type="ChEBI" id="CHEBI:60392"/>
        <dbReference type="ChEBI" id="CHEBI:61386"/>
        <dbReference type="ChEBI" id="CHEBI:61387"/>
        <dbReference type="EC" id="2.7.8.13"/>
    </reaction>
</comment>
<comment type="cofactor">
    <cofactor evidence="1">
        <name>Mg(2+)</name>
        <dbReference type="ChEBI" id="CHEBI:18420"/>
    </cofactor>
</comment>
<comment type="pathway">
    <text evidence="1">Cell wall biogenesis; peptidoglycan biosynthesis.</text>
</comment>
<comment type="subcellular location">
    <subcellularLocation>
        <location evidence="1">Cell inner membrane</location>
        <topology evidence="1">Multi-pass membrane protein</topology>
    </subcellularLocation>
</comment>
<comment type="similarity">
    <text evidence="1">Belongs to the glycosyltransferase 4 family. MraY subfamily.</text>
</comment>
<gene>
    <name evidence="1" type="primary">mraY</name>
    <name type="ordered locus">BAbS19_I13590</name>
</gene>
<accession>B2S6Q7</accession>